<proteinExistence type="evidence at protein level"/>
<protein>
    <recommendedName>
        <fullName evidence="8">Ubiquitin thioesterase otulin</fullName>
        <ecNumber evidence="4 6">3.4.19.12</ecNumber>
    </recommendedName>
    <alternativeName>
        <fullName evidence="1">Deubiquitinating enzyme otulin</fullName>
    </alternativeName>
    <alternativeName>
        <fullName evidence="1">OTU domain-containing deubiquitinase with linear linkage specificity</fullName>
    </alternativeName>
    <alternativeName>
        <fullName evidence="7">Ubiquitin thioesterase Gumby</fullName>
    </alternativeName>
</protein>
<name>OTUL_MOUSE</name>
<reference key="1">
    <citation type="journal article" date="2005" name="Science">
        <title>The transcriptional landscape of the mammalian genome.</title>
        <authorList>
            <person name="Carninci P."/>
            <person name="Kasukawa T."/>
            <person name="Katayama S."/>
            <person name="Gough J."/>
            <person name="Frith M.C."/>
            <person name="Maeda N."/>
            <person name="Oyama R."/>
            <person name="Ravasi T."/>
            <person name="Lenhard B."/>
            <person name="Wells C."/>
            <person name="Kodzius R."/>
            <person name="Shimokawa K."/>
            <person name="Bajic V.B."/>
            <person name="Brenner S.E."/>
            <person name="Batalov S."/>
            <person name="Forrest A.R."/>
            <person name="Zavolan M."/>
            <person name="Davis M.J."/>
            <person name="Wilming L.G."/>
            <person name="Aidinis V."/>
            <person name="Allen J.E."/>
            <person name="Ambesi-Impiombato A."/>
            <person name="Apweiler R."/>
            <person name="Aturaliya R.N."/>
            <person name="Bailey T.L."/>
            <person name="Bansal M."/>
            <person name="Baxter L."/>
            <person name="Beisel K.W."/>
            <person name="Bersano T."/>
            <person name="Bono H."/>
            <person name="Chalk A.M."/>
            <person name="Chiu K.P."/>
            <person name="Choudhary V."/>
            <person name="Christoffels A."/>
            <person name="Clutterbuck D.R."/>
            <person name="Crowe M.L."/>
            <person name="Dalla E."/>
            <person name="Dalrymple B.P."/>
            <person name="de Bono B."/>
            <person name="Della Gatta G."/>
            <person name="di Bernardo D."/>
            <person name="Down T."/>
            <person name="Engstrom P."/>
            <person name="Fagiolini M."/>
            <person name="Faulkner G."/>
            <person name="Fletcher C.F."/>
            <person name="Fukushima T."/>
            <person name="Furuno M."/>
            <person name="Futaki S."/>
            <person name="Gariboldi M."/>
            <person name="Georgii-Hemming P."/>
            <person name="Gingeras T.R."/>
            <person name="Gojobori T."/>
            <person name="Green R.E."/>
            <person name="Gustincich S."/>
            <person name="Harbers M."/>
            <person name="Hayashi Y."/>
            <person name="Hensch T.K."/>
            <person name="Hirokawa N."/>
            <person name="Hill D."/>
            <person name="Huminiecki L."/>
            <person name="Iacono M."/>
            <person name="Ikeo K."/>
            <person name="Iwama A."/>
            <person name="Ishikawa T."/>
            <person name="Jakt M."/>
            <person name="Kanapin A."/>
            <person name="Katoh M."/>
            <person name="Kawasawa Y."/>
            <person name="Kelso J."/>
            <person name="Kitamura H."/>
            <person name="Kitano H."/>
            <person name="Kollias G."/>
            <person name="Krishnan S.P."/>
            <person name="Kruger A."/>
            <person name="Kummerfeld S.K."/>
            <person name="Kurochkin I.V."/>
            <person name="Lareau L.F."/>
            <person name="Lazarevic D."/>
            <person name="Lipovich L."/>
            <person name="Liu J."/>
            <person name="Liuni S."/>
            <person name="McWilliam S."/>
            <person name="Madan Babu M."/>
            <person name="Madera M."/>
            <person name="Marchionni L."/>
            <person name="Matsuda H."/>
            <person name="Matsuzawa S."/>
            <person name="Miki H."/>
            <person name="Mignone F."/>
            <person name="Miyake S."/>
            <person name="Morris K."/>
            <person name="Mottagui-Tabar S."/>
            <person name="Mulder N."/>
            <person name="Nakano N."/>
            <person name="Nakauchi H."/>
            <person name="Ng P."/>
            <person name="Nilsson R."/>
            <person name="Nishiguchi S."/>
            <person name="Nishikawa S."/>
            <person name="Nori F."/>
            <person name="Ohara O."/>
            <person name="Okazaki Y."/>
            <person name="Orlando V."/>
            <person name="Pang K.C."/>
            <person name="Pavan W.J."/>
            <person name="Pavesi G."/>
            <person name="Pesole G."/>
            <person name="Petrovsky N."/>
            <person name="Piazza S."/>
            <person name="Reed J."/>
            <person name="Reid J.F."/>
            <person name="Ring B.Z."/>
            <person name="Ringwald M."/>
            <person name="Rost B."/>
            <person name="Ruan Y."/>
            <person name="Salzberg S.L."/>
            <person name="Sandelin A."/>
            <person name="Schneider C."/>
            <person name="Schoenbach C."/>
            <person name="Sekiguchi K."/>
            <person name="Semple C.A."/>
            <person name="Seno S."/>
            <person name="Sessa L."/>
            <person name="Sheng Y."/>
            <person name="Shibata Y."/>
            <person name="Shimada H."/>
            <person name="Shimada K."/>
            <person name="Silva D."/>
            <person name="Sinclair B."/>
            <person name="Sperling S."/>
            <person name="Stupka E."/>
            <person name="Sugiura K."/>
            <person name="Sultana R."/>
            <person name="Takenaka Y."/>
            <person name="Taki K."/>
            <person name="Tammoja K."/>
            <person name="Tan S.L."/>
            <person name="Tang S."/>
            <person name="Taylor M.S."/>
            <person name="Tegner J."/>
            <person name="Teichmann S.A."/>
            <person name="Ueda H.R."/>
            <person name="van Nimwegen E."/>
            <person name="Verardo R."/>
            <person name="Wei C.L."/>
            <person name="Yagi K."/>
            <person name="Yamanishi H."/>
            <person name="Zabarovsky E."/>
            <person name="Zhu S."/>
            <person name="Zimmer A."/>
            <person name="Hide W."/>
            <person name="Bult C."/>
            <person name="Grimmond S.M."/>
            <person name="Teasdale R.D."/>
            <person name="Liu E.T."/>
            <person name="Brusic V."/>
            <person name="Quackenbush J."/>
            <person name="Wahlestedt C."/>
            <person name="Mattick J.S."/>
            <person name="Hume D.A."/>
            <person name="Kai C."/>
            <person name="Sasaki D."/>
            <person name="Tomaru Y."/>
            <person name="Fukuda S."/>
            <person name="Kanamori-Katayama M."/>
            <person name="Suzuki M."/>
            <person name="Aoki J."/>
            <person name="Arakawa T."/>
            <person name="Iida J."/>
            <person name="Imamura K."/>
            <person name="Itoh M."/>
            <person name="Kato T."/>
            <person name="Kawaji H."/>
            <person name="Kawagashira N."/>
            <person name="Kawashima T."/>
            <person name="Kojima M."/>
            <person name="Kondo S."/>
            <person name="Konno H."/>
            <person name="Nakano K."/>
            <person name="Ninomiya N."/>
            <person name="Nishio T."/>
            <person name="Okada M."/>
            <person name="Plessy C."/>
            <person name="Shibata K."/>
            <person name="Shiraki T."/>
            <person name="Suzuki S."/>
            <person name="Tagami M."/>
            <person name="Waki K."/>
            <person name="Watahiki A."/>
            <person name="Okamura-Oho Y."/>
            <person name="Suzuki H."/>
            <person name="Kawai J."/>
            <person name="Hayashizaki Y."/>
        </authorList>
    </citation>
    <scope>NUCLEOTIDE SEQUENCE [LARGE SCALE MRNA]</scope>
    <source>
        <strain>C57BL/6J</strain>
        <tissue>Bone marrow</tissue>
        <tissue>Olfactory bulb</tissue>
    </source>
</reference>
<reference key="2">
    <citation type="journal article" date="2009" name="PLoS Biol.">
        <title>Lineage-specific biology revealed by a finished genome assembly of the mouse.</title>
        <authorList>
            <person name="Church D.M."/>
            <person name="Goodstadt L."/>
            <person name="Hillier L.W."/>
            <person name="Zody M.C."/>
            <person name="Goldstein S."/>
            <person name="She X."/>
            <person name="Bult C.J."/>
            <person name="Agarwala R."/>
            <person name="Cherry J.L."/>
            <person name="DiCuccio M."/>
            <person name="Hlavina W."/>
            <person name="Kapustin Y."/>
            <person name="Meric P."/>
            <person name="Maglott D."/>
            <person name="Birtle Z."/>
            <person name="Marques A.C."/>
            <person name="Graves T."/>
            <person name="Zhou S."/>
            <person name="Teague B."/>
            <person name="Potamousis K."/>
            <person name="Churas C."/>
            <person name="Place M."/>
            <person name="Herschleb J."/>
            <person name="Runnheim R."/>
            <person name="Forrest D."/>
            <person name="Amos-Landgraf J."/>
            <person name="Schwartz D.C."/>
            <person name="Cheng Z."/>
            <person name="Lindblad-Toh K."/>
            <person name="Eichler E.E."/>
            <person name="Ponting C.P."/>
        </authorList>
    </citation>
    <scope>NUCLEOTIDE SEQUENCE [LARGE SCALE GENOMIC DNA]</scope>
    <source>
        <strain>C57BL/6J</strain>
    </source>
</reference>
<reference key="3">
    <citation type="journal article" date="2004" name="Genome Res.">
        <title>The status, quality, and expansion of the NIH full-length cDNA project: the Mammalian Gene Collection (MGC).</title>
        <authorList>
            <consortium name="The MGC Project Team"/>
        </authorList>
    </citation>
    <scope>NUCLEOTIDE SEQUENCE [LARGE SCALE MRNA] OF 106-352</scope>
    <source>
        <tissue>Mammary gland</tissue>
        <tissue>Molar</tissue>
    </source>
</reference>
<reference key="4">
    <citation type="journal article" date="2013" name="Nature">
        <title>The linear ubiquitin-specific deubiquitinase gumby regulates angiogenesis.</title>
        <authorList>
            <person name="Rivkin E."/>
            <person name="Almeida S.M."/>
            <person name="Ceccarelli D.F."/>
            <person name="Juang Y.C."/>
            <person name="Maclean T.A."/>
            <person name="Srikumar T."/>
            <person name="Huang H."/>
            <person name="Dunham W.H."/>
            <person name="Fukumura R."/>
            <person name="Xie G."/>
            <person name="Gondo Y."/>
            <person name="Raught B."/>
            <person name="Gingras A.C."/>
            <person name="Sicheri F."/>
            <person name="Cordes S.P."/>
        </authorList>
    </citation>
    <scope>FUNCTION</scope>
    <scope>CATALYTIC ACTIVITY</scope>
    <scope>SUBCELLULAR LOCATION</scope>
    <scope>DISRUPTION PHENOTYPE</scope>
    <scope>DEVELOPMENTAL STAGE</scope>
    <scope>ACTIVE SITE</scope>
    <scope>INTERACTION WITH RNF31 AND DVL2</scope>
    <scope>MUTAGENESIS OF TRP-96; CYS-129; ASP-336 AND 349-GLU--VAL-352</scope>
</reference>
<reference key="5">
    <citation type="journal article" date="2016" name="Cell">
        <title>The deubiquitinase OTULIN is an essential negative regulator of inflammation and autoimmunity.</title>
        <authorList>
            <person name="Damgaard R.B."/>
            <person name="Walker J.A."/>
            <person name="Marco-Casanova P."/>
            <person name="Morgan N.V."/>
            <person name="Titheradge H.L."/>
            <person name="Elliott P.R."/>
            <person name="McHale D."/>
            <person name="Maher E.R."/>
            <person name="McKenzie A.N."/>
            <person name="Komander D."/>
        </authorList>
    </citation>
    <scope>FUNCTION</scope>
    <scope>DISRUPTION PHENOTYPE</scope>
</reference>
<reference key="6">
    <citation type="journal article" date="2018" name="Nature">
        <title>OTULIN limits cell death and inflammation by deubiquitinating LUBAC.</title>
        <authorList>
            <person name="Heger K."/>
            <person name="Wickliffe K.E."/>
            <person name="Ndoja A."/>
            <person name="Zhang J."/>
            <person name="Murthy A."/>
            <person name="Dugger D.L."/>
            <person name="Maltzman A."/>
            <person name="de Sousa E Melo F."/>
            <person name="Hung J."/>
            <person name="Zeng Y."/>
            <person name="Verschueren E."/>
            <person name="Kirkpatrick D.S."/>
            <person name="Vucic D."/>
            <person name="Lee W.P."/>
            <person name="Roose-Girma M."/>
            <person name="Newman R.J."/>
            <person name="Warming S."/>
            <person name="Hsiao Y.C."/>
            <person name="Komuves L.G."/>
            <person name="Webster J.D."/>
            <person name="Newton K."/>
            <person name="Dixit V.M."/>
        </authorList>
    </citation>
    <scope>FUNCTION</scope>
    <scope>CATALYTIC ACTIVITY</scope>
    <scope>MUTAGENESIS OF CYS-129</scope>
</reference>
<dbReference type="EC" id="3.4.19.12" evidence="4 6"/>
<dbReference type="EMBL" id="AK134955">
    <property type="protein sequence ID" value="BAE22354.1"/>
    <property type="status" value="ALT_INIT"/>
    <property type="molecule type" value="mRNA"/>
</dbReference>
<dbReference type="EMBL" id="AK150371">
    <property type="protein sequence ID" value="BAE29504.1"/>
    <property type="molecule type" value="mRNA"/>
</dbReference>
<dbReference type="EMBL" id="GL456173">
    <property type="status" value="NOT_ANNOTATED_CDS"/>
    <property type="molecule type" value="Genomic_DNA"/>
</dbReference>
<dbReference type="EMBL" id="BC028541">
    <property type="protein sequence ID" value="AAH28541.1"/>
    <property type="molecule type" value="mRNA"/>
</dbReference>
<dbReference type="EMBL" id="BC087945">
    <property type="protein sequence ID" value="AAH87945.1"/>
    <property type="status" value="ALT_INIT"/>
    <property type="molecule type" value="mRNA"/>
</dbReference>
<dbReference type="CCDS" id="CCDS49586.1"/>
<dbReference type="RefSeq" id="NP_001013814.2">
    <property type="nucleotide sequence ID" value="NM_001013792.3"/>
</dbReference>
<dbReference type="SMR" id="Q3UCV8"/>
<dbReference type="BioGRID" id="240910">
    <property type="interactions" value="3"/>
</dbReference>
<dbReference type="FunCoup" id="Q3UCV8">
    <property type="interactions" value="714"/>
</dbReference>
<dbReference type="STRING" id="10090.ENSMUSP00000057893"/>
<dbReference type="GlyGen" id="Q3UCV8">
    <property type="glycosylation" value="1 site"/>
</dbReference>
<dbReference type="iPTMnet" id="Q3UCV8"/>
<dbReference type="PhosphoSitePlus" id="Q3UCV8"/>
<dbReference type="SwissPalm" id="Q3UCV8"/>
<dbReference type="PaxDb" id="10090-ENSMUSP00000057893"/>
<dbReference type="PeptideAtlas" id="Q3UCV8"/>
<dbReference type="ProteomicsDB" id="294136"/>
<dbReference type="Pumba" id="Q3UCV8"/>
<dbReference type="Antibodypedia" id="56178">
    <property type="antibodies" value="92 antibodies from 22 providers"/>
</dbReference>
<dbReference type="DNASU" id="432940"/>
<dbReference type="Ensembl" id="ENSMUST00000059662.8">
    <property type="protein sequence ID" value="ENSMUSP00000057893.8"/>
    <property type="gene ID" value="ENSMUSG00000046034.9"/>
</dbReference>
<dbReference type="GeneID" id="432940"/>
<dbReference type="KEGG" id="mmu:432940"/>
<dbReference type="UCSC" id="uc007vjr.1">
    <property type="organism name" value="mouse"/>
</dbReference>
<dbReference type="AGR" id="MGI:3577015"/>
<dbReference type="CTD" id="90268"/>
<dbReference type="MGI" id="MGI:3577015">
    <property type="gene designation" value="Otulin"/>
</dbReference>
<dbReference type="VEuPathDB" id="HostDB:ENSMUSG00000046034"/>
<dbReference type="eggNOG" id="ENOG502QTB8">
    <property type="taxonomic scope" value="Eukaryota"/>
</dbReference>
<dbReference type="GeneTree" id="ENSGT00390000009802"/>
<dbReference type="HOGENOM" id="CLU_051856_1_1_1"/>
<dbReference type="InParanoid" id="Q3UCV8"/>
<dbReference type="OMA" id="CAFRATL"/>
<dbReference type="OrthoDB" id="6288034at2759"/>
<dbReference type="PhylomeDB" id="Q3UCV8"/>
<dbReference type="TreeFam" id="TF328709"/>
<dbReference type="Reactome" id="R-MMU-8866652">
    <property type="pathway name" value="Synthesis of active ubiquitin: roles of E1 and E2 enzymes"/>
</dbReference>
<dbReference type="BioGRID-ORCS" id="432940">
    <property type="hits" value="9 hits in 81 CRISPR screens"/>
</dbReference>
<dbReference type="ChiTaRS" id="Otulin">
    <property type="organism name" value="mouse"/>
</dbReference>
<dbReference type="PRO" id="PR:Q3UCV8"/>
<dbReference type="Proteomes" id="UP000000589">
    <property type="component" value="Chromosome 15"/>
</dbReference>
<dbReference type="RNAct" id="Q3UCV8">
    <property type="molecule type" value="protein"/>
</dbReference>
<dbReference type="Bgee" id="ENSMUSG00000046034">
    <property type="expression patterns" value="Expressed in yolk sac and 221 other cell types or tissues"/>
</dbReference>
<dbReference type="ExpressionAtlas" id="Q3UCV8">
    <property type="expression patterns" value="baseline and differential"/>
</dbReference>
<dbReference type="GO" id="GO:0005737">
    <property type="term" value="C:cytoplasm"/>
    <property type="evidence" value="ECO:0000314"/>
    <property type="project" value="UniProtKB"/>
</dbReference>
<dbReference type="GO" id="GO:0004843">
    <property type="term" value="F:cysteine-type deubiquitinase activity"/>
    <property type="evidence" value="ECO:0000314"/>
    <property type="project" value="UniProtKB"/>
</dbReference>
<dbReference type="GO" id="GO:0008234">
    <property type="term" value="F:cysteine-type peptidase activity"/>
    <property type="evidence" value="ECO:0000315"/>
    <property type="project" value="UniProtKB"/>
</dbReference>
<dbReference type="GO" id="GO:0045087">
    <property type="term" value="P:innate immune response"/>
    <property type="evidence" value="ECO:0000250"/>
    <property type="project" value="UniProtKB"/>
</dbReference>
<dbReference type="GO" id="GO:0050728">
    <property type="term" value="P:negative regulation of inflammatory response"/>
    <property type="evidence" value="ECO:0000315"/>
    <property type="project" value="UniProtKB"/>
</dbReference>
<dbReference type="GO" id="GO:0032088">
    <property type="term" value="P:negative regulation of NF-kappaB transcription factor activity"/>
    <property type="evidence" value="ECO:0000315"/>
    <property type="project" value="UniProtKB"/>
</dbReference>
<dbReference type="GO" id="GO:0070431">
    <property type="term" value="P:nucleotide-binding oligomerization domain containing 2 signaling pathway"/>
    <property type="evidence" value="ECO:0000250"/>
    <property type="project" value="UniProtKB"/>
</dbReference>
<dbReference type="GO" id="GO:1990108">
    <property type="term" value="P:protein linear deubiquitination"/>
    <property type="evidence" value="ECO:0000314"/>
    <property type="project" value="UniProtKB"/>
</dbReference>
<dbReference type="GO" id="GO:0006508">
    <property type="term" value="P:proteolysis"/>
    <property type="evidence" value="ECO:0007669"/>
    <property type="project" value="UniProtKB-KW"/>
</dbReference>
<dbReference type="GO" id="GO:0060828">
    <property type="term" value="P:regulation of canonical Wnt signaling pathway"/>
    <property type="evidence" value="ECO:0000314"/>
    <property type="project" value="UniProtKB"/>
</dbReference>
<dbReference type="GO" id="GO:0010803">
    <property type="term" value="P:regulation of tumor necrosis factor-mediated signaling pathway"/>
    <property type="evidence" value="ECO:0000315"/>
    <property type="project" value="UniProtKB"/>
</dbReference>
<dbReference type="GO" id="GO:0002040">
    <property type="term" value="P:sprouting angiogenesis"/>
    <property type="evidence" value="ECO:0000315"/>
    <property type="project" value="UniProtKB"/>
</dbReference>
<dbReference type="GO" id="GO:0016055">
    <property type="term" value="P:Wnt signaling pathway"/>
    <property type="evidence" value="ECO:0007669"/>
    <property type="project" value="UniProtKB-KW"/>
</dbReference>
<dbReference type="CDD" id="cd22799">
    <property type="entry name" value="OTU_OTUL"/>
    <property type="match status" value="1"/>
</dbReference>
<dbReference type="Gene3D" id="3.30.200.60">
    <property type="entry name" value="Peptidase C65 Otubain, subdomain 1"/>
    <property type="match status" value="1"/>
</dbReference>
<dbReference type="Gene3D" id="1.20.1300.20">
    <property type="entry name" value="Peptidase C65 Otubain, subdomain 2"/>
    <property type="match status" value="1"/>
</dbReference>
<dbReference type="InterPro" id="IPR023235">
    <property type="entry name" value="FAM105"/>
</dbReference>
<dbReference type="InterPro" id="IPR023237">
    <property type="entry name" value="Otulin"/>
</dbReference>
<dbReference type="InterPro" id="IPR042468">
    <property type="entry name" value="Peptidase_C65_otubain_sub1"/>
</dbReference>
<dbReference type="InterPro" id="IPR042467">
    <property type="entry name" value="Peptidase_C65_otubain_sub2"/>
</dbReference>
<dbReference type="PANTHER" id="PTHR33662">
    <property type="entry name" value="OTU DEUBIQUITINASE WITH LINEAR LINKAGE-SPECIFICITY A-RELATED"/>
    <property type="match status" value="1"/>
</dbReference>
<dbReference type="PANTHER" id="PTHR33662:SF2">
    <property type="entry name" value="UBIQUITIN THIOESTERASE OTULIN"/>
    <property type="match status" value="1"/>
</dbReference>
<dbReference type="Pfam" id="PF16218">
    <property type="entry name" value="Peptidase_C101"/>
    <property type="match status" value="1"/>
</dbReference>
<dbReference type="PRINTS" id="PR02055">
    <property type="entry name" value="PROTEINF105"/>
</dbReference>
<dbReference type="PRINTS" id="PR02057">
    <property type="entry name" value="PROTEINF105B"/>
</dbReference>
<feature type="chain" id="PRO_0000261638" description="Ubiquitin thioesterase otulin">
    <location>
        <begin position="1"/>
        <end position="352"/>
    </location>
</feature>
<feature type="domain" description="OTU">
    <location>
        <begin position="118"/>
        <end position="346"/>
    </location>
</feature>
<feature type="region of interest" description="Disordered" evidence="3">
    <location>
        <begin position="1"/>
        <end position="49"/>
    </location>
</feature>
<feature type="region of interest" description="Linear diubiquitin binding" evidence="1">
    <location>
        <begin position="95"/>
        <end position="96"/>
    </location>
</feature>
<feature type="region of interest" description="Linear diubiquitin binding" evidence="1">
    <location>
        <begin position="124"/>
        <end position="126"/>
    </location>
</feature>
<feature type="region of interest" description="Linear diubiquitin binding" evidence="1">
    <location>
        <begin position="255"/>
        <end position="259"/>
    </location>
</feature>
<feature type="region of interest" description="Linear diubiquitin binding" evidence="1">
    <location>
        <begin position="283"/>
        <end position="289"/>
    </location>
</feature>
<feature type="region of interest" description="Linear diubiquitin binding" evidence="1">
    <location>
        <begin position="336"/>
        <end position="338"/>
    </location>
</feature>
<feature type="coiled-coil region" evidence="2">
    <location>
        <begin position="49"/>
        <end position="73"/>
    </location>
</feature>
<feature type="short sequence motif" description="PIM motif" evidence="1">
    <location>
        <begin position="52"/>
        <end position="57"/>
    </location>
</feature>
<feature type="short sequence motif" description="PDZ-binding">
    <location>
        <begin position="349"/>
        <end position="352"/>
    </location>
</feature>
<feature type="compositionally biased region" description="Low complexity" evidence="3">
    <location>
        <begin position="18"/>
        <end position="30"/>
    </location>
</feature>
<feature type="active site" evidence="4">
    <location>
        <position position="126"/>
    </location>
</feature>
<feature type="active site" description="Nucleophile" evidence="4">
    <location>
        <position position="129"/>
    </location>
</feature>
<feature type="active site" evidence="4">
    <location>
        <position position="339"/>
    </location>
</feature>
<feature type="site" description="Linear diubiquitin binding" evidence="1">
    <location>
        <position position="314"/>
    </location>
</feature>
<feature type="modified residue" description="Phosphotyrosine" evidence="1">
    <location>
        <position position="56"/>
    </location>
</feature>
<feature type="mutagenesis site" description="In Gum(W96R) mutant; defects in embryonic angiogenesis. Embryos appear normal before 11.5 dpc but die between 12.5 dpc-14 dpc, probably due to defects in organization of branching vascular networks in the head and trunk." evidence="4">
    <original>W</original>
    <variation>R</variation>
    <location>
        <position position="96"/>
    </location>
</feature>
<feature type="mutagenesis site" description="Abolishes deubiquitinase activity without affecting interaction with RNF31. Lethality at midgestation in knockin mice caused by inactivation of the LUBAC complex, leading to cell death mediated by TNFR1 and RIPK1." evidence="4 6">
    <original>C</original>
    <variation>A</variation>
    <variation>S</variation>
    <location>
        <position position="129"/>
    </location>
</feature>
<feature type="mutagenesis site" description="In Gum(D366E) mutant; defects in embryonic angiogenesis. Weaker mutant compared to Gum(W96R) mutant." evidence="4">
    <original>D</original>
    <variation>E</variation>
    <location>
        <position position="336"/>
    </location>
</feature>
<feature type="mutagenesis site" description="Does not affect interaction with RNF31." evidence="4">
    <original>ETSV</original>
    <variation>AAAA</variation>
    <location>
        <begin position="349"/>
        <end position="352"/>
    </location>
</feature>
<keyword id="KW-0007">Acetylation</keyword>
<keyword id="KW-0037">Angiogenesis</keyword>
<keyword id="KW-0175">Coiled coil</keyword>
<keyword id="KW-0963">Cytoplasm</keyword>
<keyword id="KW-0378">Hydrolase</keyword>
<keyword id="KW-0391">Immunity</keyword>
<keyword id="KW-0399">Innate immunity</keyword>
<keyword id="KW-0597">Phosphoprotein</keyword>
<keyword id="KW-0645">Protease</keyword>
<keyword id="KW-1185">Reference proteome</keyword>
<keyword id="KW-0788">Thiol protease</keyword>
<keyword id="KW-0832">Ubl conjugation</keyword>
<keyword id="KW-0833">Ubl conjugation pathway</keyword>
<keyword id="KW-0879">Wnt signaling pathway</keyword>
<organism>
    <name type="scientific">Mus musculus</name>
    <name type="common">Mouse</name>
    <dbReference type="NCBI Taxonomy" id="10090"/>
    <lineage>
        <taxon>Eukaryota</taxon>
        <taxon>Metazoa</taxon>
        <taxon>Chordata</taxon>
        <taxon>Craniata</taxon>
        <taxon>Vertebrata</taxon>
        <taxon>Euteleostomi</taxon>
        <taxon>Mammalia</taxon>
        <taxon>Eutheria</taxon>
        <taxon>Euarchontoglires</taxon>
        <taxon>Glires</taxon>
        <taxon>Rodentia</taxon>
        <taxon>Myomorpha</taxon>
        <taxon>Muroidea</taxon>
        <taxon>Muridae</taxon>
        <taxon>Murinae</taxon>
        <taxon>Mus</taxon>
        <taxon>Mus</taxon>
    </lineage>
</organism>
<accession>Q3UCV8</accession>
<accession>Q3UY59</accession>
<accession>Q5M8N1</accession>
<accession>Q8R027</accession>
<gene>
    <name evidence="9" type="primary">Otulin</name>
    <name evidence="9" type="synonym">Fam105b</name>
    <name evidence="7" type="synonym">Gum</name>
</gene>
<evidence type="ECO:0000250" key="1">
    <source>
        <dbReference type="UniProtKB" id="Q96BN8"/>
    </source>
</evidence>
<evidence type="ECO:0000255" key="2"/>
<evidence type="ECO:0000256" key="3">
    <source>
        <dbReference type="SAM" id="MobiDB-lite"/>
    </source>
</evidence>
<evidence type="ECO:0000269" key="4">
    <source>
    </source>
</evidence>
<evidence type="ECO:0000269" key="5">
    <source>
    </source>
</evidence>
<evidence type="ECO:0000269" key="6">
    <source>
    </source>
</evidence>
<evidence type="ECO:0000303" key="7">
    <source>
    </source>
</evidence>
<evidence type="ECO:0000305" key="8"/>
<evidence type="ECO:0000312" key="9">
    <source>
        <dbReference type="MGI" id="MGI:3577015"/>
    </source>
</evidence>
<comment type="function">
    <text evidence="1 4 5 6">Deubiquitinase that specifically removes linear ('Met-1'-linked) polyubiquitin chains to substrates and acts as a regulator of angiogenesis and innate immune response (PubMed:23708998, PubMed:27523608, PubMed:29950720). Required during angiogenesis, craniofacial and neuronal development by regulating the canonical Wnt signaling together with the LUBAC complex (PubMed:23708998). Acts as a negative regulator of NF-kappa-B by regulating the activity of the LUBAC complex (By similarity). OTULIN function is mainly restricted to homeostasis of the LUBAC complex: acts by removing 'Met-1'-linked autoubiquitination of the LUBAC complex, thereby preventing inactivation of the LUBAC complex (PubMed:29950720). Acts as a key negative regulator of inflammation by restricting spontaneous inflammation and maintaining immune homeostasis (PubMed:27523608, PubMed:29950720). In myeloid cell, required to prevent unwarranted secretion of cytokines leading to inflammation and autoimmunity by restricting linear polyubiquitin formation (PubMed:27523608). Plays a role in innate immune response by restricting linear polyubiquitin formation on LUBAC complex in response to NOD2 stimulation, probably to limit NOD2-dependent pro-inflammatory signaling (By similarity).</text>
</comment>
<comment type="catalytic activity">
    <reaction evidence="4 6">
        <text>Thiol-dependent hydrolysis of ester, thioester, amide, peptide and isopeptide bonds formed by the C-terminal Gly of ubiquitin (a 76-residue protein attached to proteins as an intracellular targeting signal).</text>
        <dbReference type="EC" id="3.4.19.12"/>
    </reaction>
</comment>
<comment type="subunit">
    <text evidence="4">Interacts (via the PUB domain) with RNF31 (via the PIM motif); the interaction is direct (PubMed:23708998). Interacts with DVL2 (PubMed:23708998).</text>
</comment>
<comment type="subcellular location">
    <subcellularLocation>
        <location evidence="4">Cytoplasm</location>
    </subcellularLocation>
</comment>
<comment type="developmental stage">
    <text evidence="4">Enriched in a subset of endothelial cells near presumptive tips of vessels and vascular buds (at protein level).</text>
</comment>
<comment type="domain">
    <text evidence="1">The specificity for linear polyubiquitin is given by the 'Glu-16' residue in ubiquitin chain.</text>
</comment>
<comment type="domain">
    <text evidence="1">The PIM (PUB-interaction motif) motif mediates interaction with the PUB domain of RNF31. Does not interact with other PUB domain-containing proteins. Phosphorylation at Tyr-56 prevents interaction with RNF31.</text>
</comment>
<comment type="PTM">
    <text evidence="1">Ubiquitinated.</text>
</comment>
<comment type="PTM">
    <text evidence="1">Acetylated.</text>
</comment>
<comment type="PTM">
    <text evidence="1">Phosphorylated. Phosphorylation at Tyr-56 prevents interaction with RNF31; dephosphorylation promotes interaction with RNF31 and the LUBAC complex.</text>
</comment>
<comment type="disruption phenotype">
    <text evidence="4 5">Embryonic lethality (PubMed:23708998, PubMed:27523608). Specific deletion in immune cells leads to acute systemic inflammation characterized by rapid weight loss, increased levels of pro-inflammatory cytokines in serum, neutrophilia with all the hallmarks of emergency granulopoiesis (PubMed:27523608). Specific deletion in T- or B-cells generates healthy mice with no overt inflammatory phenotypes (PubMed:27523608). In contrast, specific deletion in myeloid cells results in a strong inflammatory phenotype, characterized by chronic inflammation and autoimmunity, caused by sterile autoactivation of inflammatory pathways (PubMed:27523608).</text>
</comment>
<comment type="similarity">
    <text evidence="8">Belongs to the peptidase C65 family. Otulin subfamily.</text>
</comment>
<comment type="sequence caution" evidence="8">
    <conflict type="erroneous initiation">
        <sequence resource="EMBL-CDS" id="AAH87945"/>
    </conflict>
    <text>Truncated N-terminus.</text>
</comment>
<comment type="sequence caution" evidence="8">
    <conflict type="erroneous initiation">
        <sequence resource="EMBL-CDS" id="BAE22354"/>
    </conflict>
    <text>Truncated N-terminus.</text>
</comment>
<sequence length="352" mass="40320">MSRGTMPQPGAWPGASCAETPAREAGAAARDGGKVTAGAQPRAATRCPAEHEEDMYRAADEIEKEKELLIHERGISEPRLSVAPEMDIMDYCKKEWRGNTQKATCMKKGYEEVSQKFTSIRRVRGDNYCALRATLFQAMSQLAELPPWLQDLELILLPEKLINKYTWIKQWKLGLKFDGKSEDLVEKIKESLALLRKKWVSLAAMKTAEARQTACDELFTNEEEEYSLYEAVKFLMLNRAIELYDDKEKGKEVPFFSVLLFARDTSNDPEQLLRNHLNQVGHTGGLEQVEMFLLAYAVRHSIRVYRLSKYNTEEFITVYPTDPPKDWPMVTLIAEDDRHYNIPVRVCEETSV</sequence>